<keyword id="KW-0067">ATP-binding</keyword>
<keyword id="KW-0963">Cytoplasm</keyword>
<keyword id="KW-0324">Glycolysis</keyword>
<keyword id="KW-0418">Kinase</keyword>
<keyword id="KW-0547">Nucleotide-binding</keyword>
<keyword id="KW-0808">Transferase</keyword>
<name>PGK_SALEP</name>
<evidence type="ECO:0000255" key="1">
    <source>
        <dbReference type="HAMAP-Rule" id="MF_00145"/>
    </source>
</evidence>
<dbReference type="EC" id="2.7.2.3" evidence="1"/>
<dbReference type="EMBL" id="AM933172">
    <property type="protein sequence ID" value="CAR34490.1"/>
    <property type="molecule type" value="Genomic_DNA"/>
</dbReference>
<dbReference type="RefSeq" id="WP_000111274.1">
    <property type="nucleotide sequence ID" value="NC_011294.1"/>
</dbReference>
<dbReference type="SMR" id="B5QXJ6"/>
<dbReference type="KEGG" id="set:SEN2912"/>
<dbReference type="HOGENOM" id="CLU_025427_0_2_6"/>
<dbReference type="UniPathway" id="UPA00109">
    <property type="reaction ID" value="UER00185"/>
</dbReference>
<dbReference type="Proteomes" id="UP000000613">
    <property type="component" value="Chromosome"/>
</dbReference>
<dbReference type="GO" id="GO:0005829">
    <property type="term" value="C:cytosol"/>
    <property type="evidence" value="ECO:0007669"/>
    <property type="project" value="TreeGrafter"/>
</dbReference>
<dbReference type="GO" id="GO:0043531">
    <property type="term" value="F:ADP binding"/>
    <property type="evidence" value="ECO:0007669"/>
    <property type="project" value="TreeGrafter"/>
</dbReference>
<dbReference type="GO" id="GO:0005524">
    <property type="term" value="F:ATP binding"/>
    <property type="evidence" value="ECO:0007669"/>
    <property type="project" value="UniProtKB-KW"/>
</dbReference>
<dbReference type="GO" id="GO:0004618">
    <property type="term" value="F:phosphoglycerate kinase activity"/>
    <property type="evidence" value="ECO:0007669"/>
    <property type="project" value="UniProtKB-UniRule"/>
</dbReference>
<dbReference type="GO" id="GO:0006094">
    <property type="term" value="P:gluconeogenesis"/>
    <property type="evidence" value="ECO:0007669"/>
    <property type="project" value="TreeGrafter"/>
</dbReference>
<dbReference type="GO" id="GO:0006096">
    <property type="term" value="P:glycolytic process"/>
    <property type="evidence" value="ECO:0007669"/>
    <property type="project" value="UniProtKB-UniRule"/>
</dbReference>
<dbReference type="FunFam" id="3.40.50.1260:FF:000001">
    <property type="entry name" value="Phosphoglycerate kinase"/>
    <property type="match status" value="1"/>
</dbReference>
<dbReference type="FunFam" id="3.40.50.1260:FF:000002">
    <property type="entry name" value="Phosphoglycerate kinase"/>
    <property type="match status" value="1"/>
</dbReference>
<dbReference type="Gene3D" id="3.40.50.1260">
    <property type="entry name" value="Phosphoglycerate kinase, N-terminal domain"/>
    <property type="match status" value="2"/>
</dbReference>
<dbReference type="HAMAP" id="MF_00145">
    <property type="entry name" value="Phosphoglyc_kinase"/>
    <property type="match status" value="1"/>
</dbReference>
<dbReference type="InterPro" id="IPR001576">
    <property type="entry name" value="Phosphoglycerate_kinase"/>
</dbReference>
<dbReference type="InterPro" id="IPR015911">
    <property type="entry name" value="Phosphoglycerate_kinase_CS"/>
</dbReference>
<dbReference type="InterPro" id="IPR015824">
    <property type="entry name" value="Phosphoglycerate_kinase_N"/>
</dbReference>
<dbReference type="InterPro" id="IPR036043">
    <property type="entry name" value="Phosphoglycerate_kinase_sf"/>
</dbReference>
<dbReference type="PANTHER" id="PTHR11406">
    <property type="entry name" value="PHOSPHOGLYCERATE KINASE"/>
    <property type="match status" value="1"/>
</dbReference>
<dbReference type="PANTHER" id="PTHR11406:SF23">
    <property type="entry name" value="PHOSPHOGLYCERATE KINASE 1, CHLOROPLASTIC-RELATED"/>
    <property type="match status" value="1"/>
</dbReference>
<dbReference type="Pfam" id="PF00162">
    <property type="entry name" value="PGK"/>
    <property type="match status" value="1"/>
</dbReference>
<dbReference type="PIRSF" id="PIRSF000724">
    <property type="entry name" value="Pgk"/>
    <property type="match status" value="1"/>
</dbReference>
<dbReference type="PRINTS" id="PR00477">
    <property type="entry name" value="PHGLYCKINASE"/>
</dbReference>
<dbReference type="SUPFAM" id="SSF53748">
    <property type="entry name" value="Phosphoglycerate kinase"/>
    <property type="match status" value="1"/>
</dbReference>
<dbReference type="PROSITE" id="PS00111">
    <property type="entry name" value="PGLYCERATE_KINASE"/>
    <property type="match status" value="1"/>
</dbReference>
<reference key="1">
    <citation type="journal article" date="2008" name="Genome Res.">
        <title>Comparative genome analysis of Salmonella enteritidis PT4 and Salmonella gallinarum 287/91 provides insights into evolutionary and host adaptation pathways.</title>
        <authorList>
            <person name="Thomson N.R."/>
            <person name="Clayton D.J."/>
            <person name="Windhorst D."/>
            <person name="Vernikos G."/>
            <person name="Davidson S."/>
            <person name="Churcher C."/>
            <person name="Quail M.A."/>
            <person name="Stevens M."/>
            <person name="Jones M.A."/>
            <person name="Watson M."/>
            <person name="Barron A."/>
            <person name="Layton A."/>
            <person name="Pickard D."/>
            <person name="Kingsley R.A."/>
            <person name="Bignell A."/>
            <person name="Clark L."/>
            <person name="Harris B."/>
            <person name="Ormond D."/>
            <person name="Abdellah Z."/>
            <person name="Brooks K."/>
            <person name="Cherevach I."/>
            <person name="Chillingworth T."/>
            <person name="Woodward J."/>
            <person name="Norberczak H."/>
            <person name="Lord A."/>
            <person name="Arrowsmith C."/>
            <person name="Jagels K."/>
            <person name="Moule S."/>
            <person name="Mungall K."/>
            <person name="Saunders M."/>
            <person name="Whitehead S."/>
            <person name="Chabalgoity J.A."/>
            <person name="Maskell D."/>
            <person name="Humphreys T."/>
            <person name="Roberts M."/>
            <person name="Barrow P.A."/>
            <person name="Dougan G."/>
            <person name="Parkhill J."/>
        </authorList>
    </citation>
    <scope>NUCLEOTIDE SEQUENCE [LARGE SCALE GENOMIC DNA]</scope>
    <source>
        <strain>P125109</strain>
    </source>
</reference>
<feature type="chain" id="PRO_1000096371" description="Phosphoglycerate kinase">
    <location>
        <begin position="1"/>
        <end position="387"/>
    </location>
</feature>
<feature type="binding site" evidence="1">
    <location>
        <begin position="21"/>
        <end position="23"/>
    </location>
    <ligand>
        <name>substrate</name>
    </ligand>
</feature>
<feature type="binding site" evidence="1">
    <location>
        <position position="36"/>
    </location>
    <ligand>
        <name>substrate</name>
    </ligand>
</feature>
<feature type="binding site" evidence="1">
    <location>
        <begin position="59"/>
        <end position="62"/>
    </location>
    <ligand>
        <name>substrate</name>
    </ligand>
</feature>
<feature type="binding site" evidence="1">
    <location>
        <position position="113"/>
    </location>
    <ligand>
        <name>substrate</name>
    </ligand>
</feature>
<feature type="binding site" evidence="1">
    <location>
        <position position="146"/>
    </location>
    <ligand>
        <name>substrate</name>
    </ligand>
</feature>
<feature type="binding site" evidence="1">
    <location>
        <position position="197"/>
    </location>
    <ligand>
        <name>ATP</name>
        <dbReference type="ChEBI" id="CHEBI:30616"/>
    </ligand>
</feature>
<feature type="binding site" evidence="1">
    <location>
        <position position="314"/>
    </location>
    <ligand>
        <name>ATP</name>
        <dbReference type="ChEBI" id="CHEBI:30616"/>
    </ligand>
</feature>
<feature type="binding site" evidence="1">
    <location>
        <begin position="340"/>
        <end position="343"/>
    </location>
    <ligand>
        <name>ATP</name>
        <dbReference type="ChEBI" id="CHEBI:30616"/>
    </ligand>
</feature>
<organism>
    <name type="scientific">Salmonella enteritidis PT4 (strain P125109)</name>
    <dbReference type="NCBI Taxonomy" id="550537"/>
    <lineage>
        <taxon>Bacteria</taxon>
        <taxon>Pseudomonadati</taxon>
        <taxon>Pseudomonadota</taxon>
        <taxon>Gammaproteobacteria</taxon>
        <taxon>Enterobacterales</taxon>
        <taxon>Enterobacteriaceae</taxon>
        <taxon>Salmonella</taxon>
    </lineage>
</organism>
<accession>B5QXJ6</accession>
<proteinExistence type="inferred from homology"/>
<comment type="catalytic activity">
    <reaction evidence="1">
        <text>(2R)-3-phosphoglycerate + ATP = (2R)-3-phospho-glyceroyl phosphate + ADP</text>
        <dbReference type="Rhea" id="RHEA:14801"/>
        <dbReference type="ChEBI" id="CHEBI:30616"/>
        <dbReference type="ChEBI" id="CHEBI:57604"/>
        <dbReference type="ChEBI" id="CHEBI:58272"/>
        <dbReference type="ChEBI" id="CHEBI:456216"/>
        <dbReference type="EC" id="2.7.2.3"/>
    </reaction>
</comment>
<comment type="pathway">
    <text evidence="1">Carbohydrate degradation; glycolysis; pyruvate from D-glyceraldehyde 3-phosphate: step 2/5.</text>
</comment>
<comment type="subunit">
    <text evidence="1">Monomer.</text>
</comment>
<comment type="subcellular location">
    <subcellularLocation>
        <location evidence="1">Cytoplasm</location>
    </subcellularLocation>
</comment>
<comment type="similarity">
    <text evidence="1">Belongs to the phosphoglycerate kinase family.</text>
</comment>
<gene>
    <name evidence="1" type="primary">pgk</name>
    <name type="ordered locus">SEN2912</name>
</gene>
<sequence>MSVIKMTDLDLAGKRVFIRADLNVPVKEGKVTSDARIRASLPTIELALKQGAKVMVTSHLGRPTEGEYNEEFSLLPVVNYLKDKLSNPVRLVKDYLDGVDVAEGELVVLENVRFNKGEKKDDEALSKKYAALCDVFVMDAFGTAHRAQASTHGIGKFADVACAGPLLAAELDALGKALKEPARPMVAIVGGSKVSTKLTVLDSLSKIADQLIVGGGIANTFVAAQGHSVGKSLYEADLVDEAKRLLTTCDIPVPTDVRVATEFSETAPATLKSVNDVKEDEQILDIGDASAQQLAEILKNAKTILWNGPVGVFEFPNFRKGTEIVANAIADSEAFSIAGGGDTLAAIDLFGIADKISYISTGGGAFLEFVEGKVLPAVAMLEERAKK</sequence>
<protein>
    <recommendedName>
        <fullName evidence="1">Phosphoglycerate kinase</fullName>
        <ecNumber evidence="1">2.7.2.3</ecNumber>
    </recommendedName>
</protein>